<organism>
    <name type="scientific">Mycobacterium tuberculosis (strain CDC 1551 / Oshkosh)</name>
    <dbReference type="NCBI Taxonomy" id="83331"/>
    <lineage>
        <taxon>Bacteria</taxon>
        <taxon>Bacillati</taxon>
        <taxon>Actinomycetota</taxon>
        <taxon>Actinomycetes</taxon>
        <taxon>Mycobacteriales</taxon>
        <taxon>Mycobacteriaceae</taxon>
        <taxon>Mycobacterium</taxon>
        <taxon>Mycobacterium tuberculosis complex</taxon>
    </lineage>
</organism>
<gene>
    <name evidence="1" type="primary">nadA</name>
    <name type="ordered locus">MT1630</name>
</gene>
<proteinExistence type="inferred from homology"/>
<feature type="chain" id="PRO_0000427816" description="Quinolinate synthase">
    <location>
        <begin position="1"/>
        <end position="349"/>
    </location>
</feature>
<feature type="binding site" evidence="1">
    <location>
        <position position="52"/>
    </location>
    <ligand>
        <name>iminosuccinate</name>
        <dbReference type="ChEBI" id="CHEBI:77875"/>
    </ligand>
</feature>
<feature type="binding site" evidence="1">
    <location>
        <position position="69"/>
    </location>
    <ligand>
        <name>iminosuccinate</name>
        <dbReference type="ChEBI" id="CHEBI:77875"/>
    </ligand>
</feature>
<feature type="binding site" evidence="1">
    <location>
        <position position="114"/>
    </location>
    <ligand>
        <name>[4Fe-4S] cluster</name>
        <dbReference type="ChEBI" id="CHEBI:49883"/>
    </ligand>
</feature>
<feature type="binding site" evidence="1">
    <location>
        <begin position="140"/>
        <end position="142"/>
    </location>
    <ligand>
        <name>iminosuccinate</name>
        <dbReference type="ChEBI" id="CHEBI:77875"/>
    </ligand>
</feature>
<feature type="binding site" evidence="1">
    <location>
        <position position="157"/>
    </location>
    <ligand>
        <name>iminosuccinate</name>
        <dbReference type="ChEBI" id="CHEBI:77875"/>
    </ligand>
</feature>
<feature type="binding site" evidence="1">
    <location>
        <position position="201"/>
    </location>
    <ligand>
        <name>[4Fe-4S] cluster</name>
        <dbReference type="ChEBI" id="CHEBI:49883"/>
    </ligand>
</feature>
<feature type="binding site" evidence="1">
    <location>
        <begin position="227"/>
        <end position="229"/>
    </location>
    <ligand>
        <name>iminosuccinate</name>
        <dbReference type="ChEBI" id="CHEBI:77875"/>
    </ligand>
</feature>
<feature type="binding site" evidence="1">
    <location>
        <position position="255"/>
    </location>
    <ligand>
        <name>iminosuccinate</name>
        <dbReference type="ChEBI" id="CHEBI:77875"/>
    </ligand>
</feature>
<feature type="binding site" evidence="1">
    <location>
        <position position="300"/>
    </location>
    <ligand>
        <name>[4Fe-4S] cluster</name>
        <dbReference type="ChEBI" id="CHEBI:49883"/>
    </ligand>
</feature>
<keyword id="KW-0004">4Fe-4S</keyword>
<keyword id="KW-0963">Cytoplasm</keyword>
<keyword id="KW-0408">Iron</keyword>
<keyword id="KW-0411">Iron-sulfur</keyword>
<keyword id="KW-0479">Metal-binding</keyword>
<keyword id="KW-0662">Pyridine nucleotide biosynthesis</keyword>
<keyword id="KW-1185">Reference proteome</keyword>
<keyword id="KW-0808">Transferase</keyword>
<reference key="1">
    <citation type="journal article" date="2002" name="J. Bacteriol.">
        <title>Whole-genome comparison of Mycobacterium tuberculosis clinical and laboratory strains.</title>
        <authorList>
            <person name="Fleischmann R.D."/>
            <person name="Alland D."/>
            <person name="Eisen J.A."/>
            <person name="Carpenter L."/>
            <person name="White O."/>
            <person name="Peterson J.D."/>
            <person name="DeBoy R.T."/>
            <person name="Dodson R.J."/>
            <person name="Gwinn M.L."/>
            <person name="Haft D.H."/>
            <person name="Hickey E.K."/>
            <person name="Kolonay J.F."/>
            <person name="Nelson W.C."/>
            <person name="Umayam L.A."/>
            <person name="Ermolaeva M.D."/>
            <person name="Salzberg S.L."/>
            <person name="Delcher A."/>
            <person name="Utterback T.R."/>
            <person name="Weidman J.F."/>
            <person name="Khouri H.M."/>
            <person name="Gill J."/>
            <person name="Mikula A."/>
            <person name="Bishai W."/>
            <person name="Jacobs W.R. Jr."/>
            <person name="Venter J.C."/>
            <person name="Fraser C.M."/>
        </authorList>
    </citation>
    <scope>NUCLEOTIDE SEQUENCE [LARGE SCALE GENOMIC DNA]</scope>
    <source>
        <strain>CDC 1551 / Oshkosh</strain>
    </source>
</reference>
<sequence length="349" mass="37408">MTVLNRTDTLVDELTADITNTPLGYGGVDGDERWAAEIRRLAHLRGATVLAHNYQLPAIQDVADHVGDSLALSRVAAEAPEDTIVFCGVHFMAETAKILSPHKTVLIPDQRAGCSLADSITPDELRAWKDEHPGAVVVSYVNTTAAVKALTDICCTSSNAVDVVASIDPDREVLFCPDQFLGAHVRRVTGRKNLHVWAGECHVHAGINGDELADQARAHPDAELFVHPECGCATSALYLAGEGAFPAERVKILSTGGMLEAAHTTRARQVLVATEVGMLHQLRRAAPEVDFRAVNDRASCKYMKMITPAALLRCLVEGADEVHVDPGIAASGRRSVQRMIEIGHPGGGE</sequence>
<evidence type="ECO:0000255" key="1">
    <source>
        <dbReference type="HAMAP-Rule" id="MF_00568"/>
    </source>
</evidence>
<comment type="function">
    <text evidence="1">Catalyzes the condensation of iminoaspartate with dihydroxyacetone phosphate to form quinolinate.</text>
</comment>
<comment type="catalytic activity">
    <reaction evidence="1">
        <text>iminosuccinate + dihydroxyacetone phosphate = quinolinate + phosphate + 2 H2O + H(+)</text>
        <dbReference type="Rhea" id="RHEA:25888"/>
        <dbReference type="ChEBI" id="CHEBI:15377"/>
        <dbReference type="ChEBI" id="CHEBI:15378"/>
        <dbReference type="ChEBI" id="CHEBI:29959"/>
        <dbReference type="ChEBI" id="CHEBI:43474"/>
        <dbReference type="ChEBI" id="CHEBI:57642"/>
        <dbReference type="ChEBI" id="CHEBI:77875"/>
        <dbReference type="EC" id="2.5.1.72"/>
    </reaction>
    <physiologicalReaction direction="left-to-right" evidence="1">
        <dbReference type="Rhea" id="RHEA:25889"/>
    </physiologicalReaction>
</comment>
<comment type="cofactor">
    <cofactor evidence="1">
        <name>[4Fe-4S] cluster</name>
        <dbReference type="ChEBI" id="CHEBI:49883"/>
    </cofactor>
    <text evidence="1">Binds 1 [4Fe-4S] cluster per subunit.</text>
</comment>
<comment type="pathway">
    <text evidence="1">Cofactor biosynthesis; NAD(+) biosynthesis; quinolinate from iminoaspartate: step 1/1.</text>
</comment>
<comment type="subcellular location">
    <subcellularLocation>
        <location evidence="1">Cytoplasm</location>
    </subcellularLocation>
</comment>
<comment type="similarity">
    <text evidence="1">Belongs to the quinolinate synthase family. Type 2 subfamily.</text>
</comment>
<name>NADA_MYCTO</name>
<dbReference type="EC" id="2.5.1.72" evidence="1"/>
<dbReference type="EMBL" id="AE000516">
    <property type="protein sequence ID" value="AAK45898.1"/>
    <property type="molecule type" value="Genomic_DNA"/>
</dbReference>
<dbReference type="PIR" id="D70543">
    <property type="entry name" value="D70543"/>
</dbReference>
<dbReference type="RefSeq" id="WP_003407931.1">
    <property type="nucleotide sequence ID" value="NZ_KK341227.1"/>
</dbReference>
<dbReference type="SMR" id="P9WJK0"/>
<dbReference type="GeneID" id="45425562"/>
<dbReference type="KEGG" id="mtc:MT1630"/>
<dbReference type="PATRIC" id="fig|83331.31.peg.1752"/>
<dbReference type="HOGENOM" id="CLU_047382_0_0_11"/>
<dbReference type="UniPathway" id="UPA00253">
    <property type="reaction ID" value="UER00327"/>
</dbReference>
<dbReference type="Proteomes" id="UP000001020">
    <property type="component" value="Chromosome"/>
</dbReference>
<dbReference type="GO" id="GO:0005829">
    <property type="term" value="C:cytosol"/>
    <property type="evidence" value="ECO:0007669"/>
    <property type="project" value="TreeGrafter"/>
</dbReference>
<dbReference type="GO" id="GO:0051539">
    <property type="term" value="F:4 iron, 4 sulfur cluster binding"/>
    <property type="evidence" value="ECO:0007669"/>
    <property type="project" value="UniProtKB-KW"/>
</dbReference>
<dbReference type="GO" id="GO:0046872">
    <property type="term" value="F:metal ion binding"/>
    <property type="evidence" value="ECO:0007669"/>
    <property type="project" value="UniProtKB-KW"/>
</dbReference>
<dbReference type="GO" id="GO:0008987">
    <property type="term" value="F:quinolinate synthetase A activity"/>
    <property type="evidence" value="ECO:0007669"/>
    <property type="project" value="UniProtKB-UniRule"/>
</dbReference>
<dbReference type="GO" id="GO:0034628">
    <property type="term" value="P:'de novo' NAD biosynthetic process from L-aspartate"/>
    <property type="evidence" value="ECO:0007669"/>
    <property type="project" value="TreeGrafter"/>
</dbReference>
<dbReference type="FunFam" id="3.40.50.10800:FF:000007">
    <property type="entry name" value="Quinolinate synthase A"/>
    <property type="match status" value="1"/>
</dbReference>
<dbReference type="Gene3D" id="3.40.50.10800">
    <property type="entry name" value="NadA-like"/>
    <property type="match status" value="3"/>
</dbReference>
<dbReference type="HAMAP" id="MF_00568">
    <property type="entry name" value="NadA_type2"/>
    <property type="match status" value="1"/>
</dbReference>
<dbReference type="InterPro" id="IPR003473">
    <property type="entry name" value="NadA"/>
</dbReference>
<dbReference type="InterPro" id="IPR036094">
    <property type="entry name" value="NadA_sf"/>
</dbReference>
<dbReference type="InterPro" id="IPR023066">
    <property type="entry name" value="Quinolinate_synth_type2"/>
</dbReference>
<dbReference type="NCBIfam" id="TIGR00550">
    <property type="entry name" value="nadA"/>
    <property type="match status" value="1"/>
</dbReference>
<dbReference type="NCBIfam" id="NF006878">
    <property type="entry name" value="PRK09375.1-2"/>
    <property type="match status" value="1"/>
</dbReference>
<dbReference type="NCBIfam" id="NF006879">
    <property type="entry name" value="PRK09375.1-4"/>
    <property type="match status" value="1"/>
</dbReference>
<dbReference type="PANTHER" id="PTHR30573:SF0">
    <property type="entry name" value="QUINOLINATE SYNTHASE, CHLOROPLASTIC"/>
    <property type="match status" value="1"/>
</dbReference>
<dbReference type="PANTHER" id="PTHR30573">
    <property type="entry name" value="QUINOLINATE SYNTHETASE A"/>
    <property type="match status" value="1"/>
</dbReference>
<dbReference type="Pfam" id="PF02445">
    <property type="entry name" value="NadA"/>
    <property type="match status" value="1"/>
</dbReference>
<dbReference type="SUPFAM" id="SSF142754">
    <property type="entry name" value="NadA-like"/>
    <property type="match status" value="1"/>
</dbReference>
<protein>
    <recommendedName>
        <fullName evidence="1">Quinolinate synthase</fullName>
        <ecNumber evidence="1">2.5.1.72</ecNumber>
    </recommendedName>
</protein>
<accession>P9WJK0</accession>
<accession>L0TA27</accession>
<accession>O06596</accession>
<accession>P65497</accession>